<protein>
    <recommendedName>
        <fullName evidence="1">Heme-degrading monooxygenase</fullName>
        <ecNumber evidence="1">1.14.14.18</ecNumber>
    </recommendedName>
    <alternativeName>
        <fullName evidence="1">Heme oxygenase</fullName>
    </alternativeName>
    <alternativeName>
        <fullName evidence="1">Iron-regulated surface determinant</fullName>
    </alternativeName>
    <alternativeName>
        <fullName evidence="1">Iron-responsive surface determinant</fullName>
    </alternativeName>
</protein>
<sequence>MIIVTNTAKITKGNGHKLIDRFNKVGQVETMPGFLGLEVLLTQNTVDYDEVTISTRWNAKEDFQGWTKSPAFKAAHSHQGGMPDYILDNKISYYDVKVVRMPMAAAQ</sequence>
<proteinExistence type="inferred from homology"/>
<feature type="chain" id="PRO_0000270071" description="Heme-degrading monooxygenase">
    <location>
        <begin position="1"/>
        <end position="107"/>
    </location>
</feature>
<feature type="domain" description="ABM" evidence="1">
    <location>
        <begin position="2"/>
        <end position="94"/>
    </location>
</feature>
<feature type="binding site" evidence="1">
    <location>
        <position position="6"/>
    </location>
    <ligand>
        <name>Fe cation</name>
        <dbReference type="ChEBI" id="CHEBI:24875"/>
    </ligand>
</feature>
<feature type="binding site" description="axial binding residue" evidence="1">
    <location>
        <position position="76"/>
    </location>
    <ligand>
        <name>heme</name>
        <dbReference type="ChEBI" id="CHEBI:30413"/>
    </ligand>
    <ligandPart>
        <name>Fe</name>
        <dbReference type="ChEBI" id="CHEBI:18248"/>
    </ligandPart>
</feature>
<feature type="site" description="Transition state stabilizer" evidence="1">
    <location>
        <position position="66"/>
    </location>
</feature>
<organism>
    <name type="scientific">Bacillus cereus (strain ATCC 10987 / NRS 248)</name>
    <dbReference type="NCBI Taxonomy" id="222523"/>
    <lineage>
        <taxon>Bacteria</taxon>
        <taxon>Bacillati</taxon>
        <taxon>Bacillota</taxon>
        <taxon>Bacilli</taxon>
        <taxon>Bacillales</taxon>
        <taxon>Bacillaceae</taxon>
        <taxon>Bacillus</taxon>
        <taxon>Bacillus cereus group</taxon>
    </lineage>
</organism>
<keyword id="KW-0963">Cytoplasm</keyword>
<keyword id="KW-0349">Heme</keyword>
<keyword id="KW-0408">Iron</keyword>
<keyword id="KW-0479">Metal-binding</keyword>
<keyword id="KW-0503">Monooxygenase</keyword>
<keyword id="KW-0560">Oxidoreductase</keyword>
<accession>Q72ZK2</accession>
<name>HDOX_BACC1</name>
<dbReference type="EC" id="1.14.14.18" evidence="1"/>
<dbReference type="EMBL" id="AE017194">
    <property type="protein sequence ID" value="AAS43567.1"/>
    <property type="molecule type" value="Genomic_DNA"/>
</dbReference>
<dbReference type="SMR" id="Q72ZK2"/>
<dbReference type="KEGG" id="bca:BCE_4666"/>
<dbReference type="HOGENOM" id="CLU_141544_2_1_9"/>
<dbReference type="Proteomes" id="UP000002527">
    <property type="component" value="Chromosome"/>
</dbReference>
<dbReference type="GO" id="GO:0005737">
    <property type="term" value="C:cytoplasm"/>
    <property type="evidence" value="ECO:0007669"/>
    <property type="project" value="UniProtKB-SubCell"/>
</dbReference>
<dbReference type="GO" id="GO:0020037">
    <property type="term" value="F:heme binding"/>
    <property type="evidence" value="ECO:0007669"/>
    <property type="project" value="UniProtKB-UniRule"/>
</dbReference>
<dbReference type="GO" id="GO:0004392">
    <property type="term" value="F:heme oxygenase (decyclizing) activity"/>
    <property type="evidence" value="ECO:0007669"/>
    <property type="project" value="UniProtKB-UniRule"/>
</dbReference>
<dbReference type="GO" id="GO:0005506">
    <property type="term" value="F:iron ion binding"/>
    <property type="evidence" value="ECO:0007669"/>
    <property type="project" value="UniProtKB-UniRule"/>
</dbReference>
<dbReference type="GO" id="GO:0042167">
    <property type="term" value="P:heme catabolic process"/>
    <property type="evidence" value="ECO:0007669"/>
    <property type="project" value="UniProtKB-UniRule"/>
</dbReference>
<dbReference type="GO" id="GO:0033212">
    <property type="term" value="P:iron import into cell"/>
    <property type="evidence" value="ECO:0007669"/>
    <property type="project" value="InterPro"/>
</dbReference>
<dbReference type="Gene3D" id="3.30.70.100">
    <property type="match status" value="1"/>
</dbReference>
<dbReference type="HAMAP" id="MF_01272">
    <property type="entry name" value="Heme_degrading_monooxygenase"/>
    <property type="match status" value="1"/>
</dbReference>
<dbReference type="InterPro" id="IPR007138">
    <property type="entry name" value="ABM_dom"/>
</dbReference>
<dbReference type="InterPro" id="IPR011008">
    <property type="entry name" value="Dimeric_a/b-barrel"/>
</dbReference>
<dbReference type="InterPro" id="IPR050404">
    <property type="entry name" value="Heme-degrading_MO"/>
</dbReference>
<dbReference type="InterPro" id="IPR023953">
    <property type="entry name" value="IsdG"/>
</dbReference>
<dbReference type="NCBIfam" id="NF009839">
    <property type="entry name" value="PRK13314.1"/>
    <property type="match status" value="1"/>
</dbReference>
<dbReference type="PANTHER" id="PTHR34474:SF4">
    <property type="entry name" value="HEME OXYGENASE (STAPHYLOBILIN-PRODUCING) 1"/>
    <property type="match status" value="1"/>
</dbReference>
<dbReference type="PANTHER" id="PTHR34474">
    <property type="entry name" value="SIGNAL TRANSDUCTION PROTEIN TRAP"/>
    <property type="match status" value="1"/>
</dbReference>
<dbReference type="Pfam" id="PF03992">
    <property type="entry name" value="ABM"/>
    <property type="match status" value="1"/>
</dbReference>
<dbReference type="SUPFAM" id="SSF54909">
    <property type="entry name" value="Dimeric alpha+beta barrel"/>
    <property type="match status" value="1"/>
</dbReference>
<dbReference type="PROSITE" id="PS51725">
    <property type="entry name" value="ABM"/>
    <property type="match status" value="1"/>
</dbReference>
<gene>
    <name evidence="1" type="primary">isdG</name>
    <name type="ordered locus">BCE_4666</name>
</gene>
<evidence type="ECO:0000255" key="1">
    <source>
        <dbReference type="HAMAP-Rule" id="MF_01272"/>
    </source>
</evidence>
<reference key="1">
    <citation type="journal article" date="2004" name="Nucleic Acids Res.">
        <title>The genome sequence of Bacillus cereus ATCC 10987 reveals metabolic adaptations and a large plasmid related to Bacillus anthracis pXO1.</title>
        <authorList>
            <person name="Rasko D.A."/>
            <person name="Ravel J."/>
            <person name="Oekstad O.A."/>
            <person name="Helgason E."/>
            <person name="Cer R.Z."/>
            <person name="Jiang L."/>
            <person name="Shores K.A."/>
            <person name="Fouts D.E."/>
            <person name="Tourasse N.J."/>
            <person name="Angiuoli S.V."/>
            <person name="Kolonay J.F."/>
            <person name="Nelson W.C."/>
            <person name="Kolstoe A.-B."/>
            <person name="Fraser C.M."/>
            <person name="Read T.D."/>
        </authorList>
    </citation>
    <scope>NUCLEOTIDE SEQUENCE [LARGE SCALE GENOMIC DNA]</scope>
    <source>
        <strain>ATCC 10987 / NRS 248</strain>
    </source>
</reference>
<comment type="function">
    <text evidence="1">Allows bacterial pathogens to use the host heme as an iron source. Catalyzes the oxidative degradation of the heme macrocyclic porphyrin ring to the biliverdin in the presence of a suitable electron donor such as ascorbate or NADPH--cytochrome P450 reductase, with subsequent release of free iron.</text>
</comment>
<comment type="catalytic activity">
    <reaction evidence="1">
        <text>heme b + 3 reduced [NADPH--hemoprotein reductase] + 3 O2 = biliverdin IXalpha + CO + Fe(2+) + 3 oxidized [NADPH--hemoprotein reductase] + 3 H2O + H(+)</text>
        <dbReference type="Rhea" id="RHEA:21764"/>
        <dbReference type="Rhea" id="RHEA-COMP:11964"/>
        <dbReference type="Rhea" id="RHEA-COMP:11965"/>
        <dbReference type="ChEBI" id="CHEBI:15377"/>
        <dbReference type="ChEBI" id="CHEBI:15378"/>
        <dbReference type="ChEBI" id="CHEBI:15379"/>
        <dbReference type="ChEBI" id="CHEBI:17245"/>
        <dbReference type="ChEBI" id="CHEBI:29033"/>
        <dbReference type="ChEBI" id="CHEBI:57618"/>
        <dbReference type="ChEBI" id="CHEBI:57991"/>
        <dbReference type="ChEBI" id="CHEBI:58210"/>
        <dbReference type="ChEBI" id="CHEBI:60344"/>
        <dbReference type="EC" id="1.14.14.18"/>
    </reaction>
</comment>
<comment type="subunit">
    <text evidence="1">Homodimer.</text>
</comment>
<comment type="subcellular location">
    <subcellularLocation>
        <location evidence="1">Cytoplasm</location>
    </subcellularLocation>
</comment>
<comment type="similarity">
    <text evidence="1">Belongs to the antibiotic biosynthesis monooxygenase family. Heme-degrading monooxygenase IsdG subfamily.</text>
</comment>